<gene>
    <name evidence="1" type="primary">panB</name>
    <name type="ordered locus">Kole_1724</name>
</gene>
<keyword id="KW-0963">Cytoplasm</keyword>
<keyword id="KW-0460">Magnesium</keyword>
<keyword id="KW-0479">Metal-binding</keyword>
<keyword id="KW-0566">Pantothenate biosynthesis</keyword>
<keyword id="KW-1185">Reference proteome</keyword>
<keyword id="KW-0808">Transferase</keyword>
<proteinExistence type="inferred from homology"/>
<reference key="1">
    <citation type="submission" date="2009-06" db="EMBL/GenBank/DDBJ databases">
        <title>Complete sequence of Thermotogales bacterium TBF 19.5.1.</title>
        <authorList>
            <consortium name="US DOE Joint Genome Institute"/>
            <person name="Lucas S."/>
            <person name="Copeland A."/>
            <person name="Lapidus A."/>
            <person name="Glavina del Rio T."/>
            <person name="Tice H."/>
            <person name="Bruce D."/>
            <person name="Goodwin L."/>
            <person name="Pitluck S."/>
            <person name="Chertkov O."/>
            <person name="Brettin T."/>
            <person name="Detter J.C."/>
            <person name="Han C."/>
            <person name="Schmutz J."/>
            <person name="Larimer F."/>
            <person name="Land M."/>
            <person name="Hauser L."/>
            <person name="Kyrpides N."/>
            <person name="Ovchinnikova G."/>
            <person name="Noll K."/>
        </authorList>
    </citation>
    <scope>NUCLEOTIDE SEQUENCE [LARGE SCALE GENOMIC DNA]</scope>
    <source>
        <strain>ATCC BAA-1733 / DSM 21960 / TBF 19.5.1</strain>
    </source>
</reference>
<organism>
    <name type="scientific">Kosmotoga olearia (strain ATCC BAA-1733 / DSM 21960 / TBF 19.5.1)</name>
    <dbReference type="NCBI Taxonomy" id="521045"/>
    <lineage>
        <taxon>Bacteria</taxon>
        <taxon>Thermotogati</taxon>
        <taxon>Thermotogota</taxon>
        <taxon>Thermotogae</taxon>
        <taxon>Kosmotogales</taxon>
        <taxon>Kosmotogaceae</taxon>
        <taxon>Kosmotoga</taxon>
    </lineage>
</organism>
<accession>C5CFR2</accession>
<protein>
    <recommendedName>
        <fullName evidence="1">3-methyl-2-oxobutanoate hydroxymethyltransferase</fullName>
        <ecNumber evidence="1">2.1.2.11</ecNumber>
    </recommendedName>
    <alternativeName>
        <fullName evidence="1">Ketopantoate hydroxymethyltransferase</fullName>
        <shortName evidence="1">KPHMT</shortName>
    </alternativeName>
</protein>
<name>PANB_KOSOT</name>
<feature type="chain" id="PRO_1000203474" description="3-methyl-2-oxobutanoate hydroxymethyltransferase">
    <location>
        <begin position="1"/>
        <end position="267"/>
    </location>
</feature>
<feature type="active site" description="Proton acceptor" evidence="1">
    <location>
        <position position="178"/>
    </location>
</feature>
<feature type="binding site" evidence="1">
    <location>
        <begin position="41"/>
        <end position="42"/>
    </location>
    <ligand>
        <name>3-methyl-2-oxobutanoate</name>
        <dbReference type="ChEBI" id="CHEBI:11851"/>
    </ligand>
</feature>
<feature type="binding site" evidence="1">
    <location>
        <position position="41"/>
    </location>
    <ligand>
        <name>Mg(2+)</name>
        <dbReference type="ChEBI" id="CHEBI:18420"/>
    </ligand>
</feature>
<feature type="binding site" evidence="1">
    <location>
        <position position="80"/>
    </location>
    <ligand>
        <name>3-methyl-2-oxobutanoate</name>
        <dbReference type="ChEBI" id="CHEBI:11851"/>
    </ligand>
</feature>
<feature type="binding site" evidence="1">
    <location>
        <position position="80"/>
    </location>
    <ligand>
        <name>Mg(2+)</name>
        <dbReference type="ChEBI" id="CHEBI:18420"/>
    </ligand>
</feature>
<feature type="binding site" evidence="1">
    <location>
        <position position="109"/>
    </location>
    <ligand>
        <name>3-methyl-2-oxobutanoate</name>
        <dbReference type="ChEBI" id="CHEBI:11851"/>
    </ligand>
</feature>
<feature type="binding site" evidence="1">
    <location>
        <position position="111"/>
    </location>
    <ligand>
        <name>Mg(2+)</name>
        <dbReference type="ChEBI" id="CHEBI:18420"/>
    </ligand>
</feature>
<sequence>MNIRQIINSKGKRKLSMVTAYSYFQAKMAEEAGIDMILVGDSYGNTILGYENTLPVTMEEMLIAVSAVRRGAPNTFVIADMPFLSYQVSEEKAIENAGRFIKVGANAVKLEGGAEVAGLVKKLVDFGIPVMGHLGLTPQHVNVIGGYRVQGKTDKSVKRLLEGVKLLEEAGVFAIVLELVVEGIAKKLTEETSVPTIGIGAGRYCDGQVLVWHDLLGINTEFSPRFVKRYANLRKDIVDALKKYNEEVKNGEFPGPENVFESGGFDE</sequence>
<evidence type="ECO:0000255" key="1">
    <source>
        <dbReference type="HAMAP-Rule" id="MF_00156"/>
    </source>
</evidence>
<comment type="function">
    <text evidence="1">Catalyzes the reversible reaction in which hydroxymethyl group from 5,10-methylenetetrahydrofolate is transferred onto alpha-ketoisovalerate to form ketopantoate.</text>
</comment>
<comment type="catalytic activity">
    <reaction evidence="1">
        <text>3-methyl-2-oxobutanoate + (6R)-5,10-methylene-5,6,7,8-tetrahydrofolate + H2O = 2-dehydropantoate + (6S)-5,6,7,8-tetrahydrofolate</text>
        <dbReference type="Rhea" id="RHEA:11824"/>
        <dbReference type="ChEBI" id="CHEBI:11561"/>
        <dbReference type="ChEBI" id="CHEBI:11851"/>
        <dbReference type="ChEBI" id="CHEBI:15377"/>
        <dbReference type="ChEBI" id="CHEBI:15636"/>
        <dbReference type="ChEBI" id="CHEBI:57453"/>
        <dbReference type="EC" id="2.1.2.11"/>
    </reaction>
</comment>
<comment type="cofactor">
    <cofactor evidence="1">
        <name>Mg(2+)</name>
        <dbReference type="ChEBI" id="CHEBI:18420"/>
    </cofactor>
    <text evidence="1">Binds 1 Mg(2+) ion per subunit.</text>
</comment>
<comment type="pathway">
    <text evidence="1">Cofactor biosynthesis; (R)-pantothenate biosynthesis; (R)-pantoate from 3-methyl-2-oxobutanoate: step 1/2.</text>
</comment>
<comment type="subunit">
    <text evidence="1">Homodecamer; pentamer of dimers.</text>
</comment>
<comment type="subcellular location">
    <subcellularLocation>
        <location evidence="1">Cytoplasm</location>
    </subcellularLocation>
</comment>
<comment type="similarity">
    <text evidence="1">Belongs to the PanB family.</text>
</comment>
<dbReference type="EC" id="2.1.2.11" evidence="1"/>
<dbReference type="EMBL" id="CP001634">
    <property type="protein sequence ID" value="ACR80410.1"/>
    <property type="molecule type" value="Genomic_DNA"/>
</dbReference>
<dbReference type="RefSeq" id="WP_015869054.1">
    <property type="nucleotide sequence ID" value="NC_012785.1"/>
</dbReference>
<dbReference type="SMR" id="C5CFR2"/>
<dbReference type="STRING" id="521045.Kole_1724"/>
<dbReference type="KEGG" id="kol:Kole_1724"/>
<dbReference type="eggNOG" id="COG0413">
    <property type="taxonomic scope" value="Bacteria"/>
</dbReference>
<dbReference type="HOGENOM" id="CLU_036645_1_0_0"/>
<dbReference type="OrthoDB" id="9781789at2"/>
<dbReference type="UniPathway" id="UPA00028">
    <property type="reaction ID" value="UER00003"/>
</dbReference>
<dbReference type="Proteomes" id="UP000002382">
    <property type="component" value="Chromosome"/>
</dbReference>
<dbReference type="GO" id="GO:0005737">
    <property type="term" value="C:cytoplasm"/>
    <property type="evidence" value="ECO:0007669"/>
    <property type="project" value="UniProtKB-SubCell"/>
</dbReference>
<dbReference type="GO" id="GO:0003864">
    <property type="term" value="F:3-methyl-2-oxobutanoate hydroxymethyltransferase activity"/>
    <property type="evidence" value="ECO:0007669"/>
    <property type="project" value="UniProtKB-UniRule"/>
</dbReference>
<dbReference type="GO" id="GO:0000287">
    <property type="term" value="F:magnesium ion binding"/>
    <property type="evidence" value="ECO:0007669"/>
    <property type="project" value="TreeGrafter"/>
</dbReference>
<dbReference type="GO" id="GO:0015940">
    <property type="term" value="P:pantothenate biosynthetic process"/>
    <property type="evidence" value="ECO:0007669"/>
    <property type="project" value="UniProtKB-UniRule"/>
</dbReference>
<dbReference type="CDD" id="cd06557">
    <property type="entry name" value="KPHMT-like"/>
    <property type="match status" value="1"/>
</dbReference>
<dbReference type="FunFam" id="3.20.20.60:FF:000003">
    <property type="entry name" value="3-methyl-2-oxobutanoate hydroxymethyltransferase"/>
    <property type="match status" value="1"/>
</dbReference>
<dbReference type="Gene3D" id="3.20.20.60">
    <property type="entry name" value="Phosphoenolpyruvate-binding domains"/>
    <property type="match status" value="1"/>
</dbReference>
<dbReference type="HAMAP" id="MF_00156">
    <property type="entry name" value="PanB"/>
    <property type="match status" value="1"/>
</dbReference>
<dbReference type="InterPro" id="IPR003700">
    <property type="entry name" value="Pantoate_hydroxy_MeTrfase"/>
</dbReference>
<dbReference type="InterPro" id="IPR015813">
    <property type="entry name" value="Pyrv/PenolPyrv_kinase-like_dom"/>
</dbReference>
<dbReference type="InterPro" id="IPR040442">
    <property type="entry name" value="Pyrv_kinase-like_dom_sf"/>
</dbReference>
<dbReference type="NCBIfam" id="TIGR00222">
    <property type="entry name" value="panB"/>
    <property type="match status" value="1"/>
</dbReference>
<dbReference type="NCBIfam" id="NF001452">
    <property type="entry name" value="PRK00311.1"/>
    <property type="match status" value="1"/>
</dbReference>
<dbReference type="PANTHER" id="PTHR20881">
    <property type="entry name" value="3-METHYL-2-OXOBUTANOATE HYDROXYMETHYLTRANSFERASE"/>
    <property type="match status" value="1"/>
</dbReference>
<dbReference type="PANTHER" id="PTHR20881:SF0">
    <property type="entry name" value="3-METHYL-2-OXOBUTANOATE HYDROXYMETHYLTRANSFERASE"/>
    <property type="match status" value="1"/>
</dbReference>
<dbReference type="Pfam" id="PF02548">
    <property type="entry name" value="Pantoate_transf"/>
    <property type="match status" value="1"/>
</dbReference>
<dbReference type="PIRSF" id="PIRSF000388">
    <property type="entry name" value="Pantoate_hydroxy_MeTrfase"/>
    <property type="match status" value="1"/>
</dbReference>
<dbReference type="SUPFAM" id="SSF51621">
    <property type="entry name" value="Phosphoenolpyruvate/pyruvate domain"/>
    <property type="match status" value="1"/>
</dbReference>